<protein>
    <recommendedName>
        <fullName evidence="1">Ribosome-releasing factor 2, mitochondrial</fullName>
        <shortName evidence="1">RRF2mt</shortName>
        <ecNumber evidence="1">3.6.5.-</ecNumber>
    </recommendedName>
    <alternativeName>
        <fullName evidence="1">Elongation factor G 2, mitochondrial</fullName>
        <shortName evidence="1">EF-G2mt</shortName>
        <shortName evidence="1">mEF-G 2</shortName>
    </alternativeName>
</protein>
<name>RRF2M_RAT</name>
<gene>
    <name type="primary">Gfm2</name>
    <name type="synonym">Efg2</name>
</gene>
<comment type="function">
    <text evidence="1">Mitochondrial GTPase that mediates the disassembly of ribosomes from messenger RNA at the termination of mitochondrial protein biosynthesis. Acts in collaboration with MRRF. GTP hydrolysis follows the ribosome disassembly and probably occurs on the ribosome large subunit. Not involved in the GTP-dependent ribosomal translocation step during translation elongation.</text>
</comment>
<comment type="catalytic activity">
    <reaction evidence="1">
        <text>GTP + H2O = GDP + phosphate + H(+)</text>
        <dbReference type="Rhea" id="RHEA:19669"/>
        <dbReference type="ChEBI" id="CHEBI:15377"/>
        <dbReference type="ChEBI" id="CHEBI:15378"/>
        <dbReference type="ChEBI" id="CHEBI:37565"/>
        <dbReference type="ChEBI" id="CHEBI:43474"/>
        <dbReference type="ChEBI" id="CHEBI:58189"/>
    </reaction>
    <physiologicalReaction direction="left-to-right" evidence="1">
        <dbReference type="Rhea" id="RHEA:19670"/>
    </physiologicalReaction>
</comment>
<comment type="subcellular location">
    <subcellularLocation>
        <location evidence="1">Mitochondrion</location>
    </subcellularLocation>
</comment>
<comment type="miscellaneous">
    <text evidence="1">This protein may be expected to contain an N-terminal transit peptide but none has been predicted.</text>
</comment>
<comment type="similarity">
    <text evidence="1">Belongs to the TRAFAC class translation factor GTPase superfamily. Classic translation factor GTPase family. EF-G/EF-2 subfamily.</text>
</comment>
<keyword id="KW-0342">GTP-binding</keyword>
<keyword id="KW-0378">Hydrolase</keyword>
<keyword id="KW-0496">Mitochondrion</keyword>
<keyword id="KW-0547">Nucleotide-binding</keyword>
<keyword id="KW-0648">Protein biosynthesis</keyword>
<keyword id="KW-1185">Reference proteome</keyword>
<dbReference type="EC" id="3.6.5.-" evidence="1"/>
<dbReference type="EMBL" id="CH473955">
    <property type="protein sequence ID" value="EDM10129.1"/>
    <property type="molecule type" value="Genomic_DNA"/>
</dbReference>
<dbReference type="EMBL" id="BC091392">
    <property type="protein sequence ID" value="AAH91392.1"/>
    <property type="molecule type" value="mRNA"/>
</dbReference>
<dbReference type="SMR" id="Q5BJP6"/>
<dbReference type="FunCoup" id="Q5BJP6">
    <property type="interactions" value="902"/>
</dbReference>
<dbReference type="STRING" id="10116.ENSRNOP00000071947"/>
<dbReference type="PhosphoSitePlus" id="Q5BJP6"/>
<dbReference type="PaxDb" id="10116-ENSRNOP00000043087"/>
<dbReference type="UCSC" id="RGD:1309854">
    <property type="organism name" value="rat"/>
</dbReference>
<dbReference type="AGR" id="RGD:1309854"/>
<dbReference type="RGD" id="1309854">
    <property type="gene designation" value="Gfm2"/>
</dbReference>
<dbReference type="eggNOG" id="KOG0464">
    <property type="taxonomic scope" value="Eukaryota"/>
</dbReference>
<dbReference type="InParanoid" id="Q5BJP6"/>
<dbReference type="PhylomeDB" id="Q5BJP6"/>
<dbReference type="Reactome" id="R-RNO-5419276">
    <property type="pathway name" value="Mitochondrial translation termination"/>
</dbReference>
<dbReference type="PRO" id="PR:Q5BJP6"/>
<dbReference type="Proteomes" id="UP000002494">
    <property type="component" value="Unplaced"/>
</dbReference>
<dbReference type="Proteomes" id="UP000234681">
    <property type="component" value="Chromosome 2"/>
</dbReference>
<dbReference type="GO" id="GO:0005739">
    <property type="term" value="C:mitochondrion"/>
    <property type="evidence" value="ECO:0007669"/>
    <property type="project" value="UniProtKB-SubCell"/>
</dbReference>
<dbReference type="GO" id="GO:0005525">
    <property type="term" value="F:GTP binding"/>
    <property type="evidence" value="ECO:0007669"/>
    <property type="project" value="UniProtKB-UniRule"/>
</dbReference>
<dbReference type="GO" id="GO:0003924">
    <property type="term" value="F:GTPase activity"/>
    <property type="evidence" value="ECO:0000250"/>
    <property type="project" value="UniProtKB"/>
</dbReference>
<dbReference type="GO" id="GO:0032543">
    <property type="term" value="P:mitochondrial translation"/>
    <property type="evidence" value="ECO:0000250"/>
    <property type="project" value="UniProtKB"/>
</dbReference>
<dbReference type="GO" id="GO:0032790">
    <property type="term" value="P:ribosome disassembly"/>
    <property type="evidence" value="ECO:0000250"/>
    <property type="project" value="UniProtKB"/>
</dbReference>
<dbReference type="CDD" id="cd01886">
    <property type="entry name" value="EF-G"/>
    <property type="match status" value="1"/>
</dbReference>
<dbReference type="CDD" id="cd16262">
    <property type="entry name" value="EFG_III"/>
    <property type="match status" value="1"/>
</dbReference>
<dbReference type="CDD" id="cd03713">
    <property type="entry name" value="EFG_mtEFG_C"/>
    <property type="match status" value="1"/>
</dbReference>
<dbReference type="CDD" id="cd04092">
    <property type="entry name" value="mtEFG2_II_like"/>
    <property type="match status" value="1"/>
</dbReference>
<dbReference type="CDD" id="cd01693">
    <property type="entry name" value="mtEFG2_like_IV"/>
    <property type="match status" value="1"/>
</dbReference>
<dbReference type="FunFam" id="2.40.30.10:FF:000053">
    <property type="entry name" value="Ribosome-releasing factor 2, mitochondrial"/>
    <property type="match status" value="1"/>
</dbReference>
<dbReference type="FunFam" id="3.30.230.10:FF:000033">
    <property type="entry name" value="Ribosome-releasing factor 2, mitochondrial"/>
    <property type="match status" value="1"/>
</dbReference>
<dbReference type="FunFam" id="3.30.70.240:FF:000008">
    <property type="entry name" value="Ribosome-releasing factor 2, mitochondrial"/>
    <property type="match status" value="1"/>
</dbReference>
<dbReference type="FunFam" id="3.30.70.870:FF:000005">
    <property type="entry name" value="Ribosome-releasing factor 2, mitochondrial"/>
    <property type="match status" value="1"/>
</dbReference>
<dbReference type="FunFam" id="3.40.50.300:FF:000514">
    <property type="entry name" value="Ribosome-releasing factor 2, mitochondrial"/>
    <property type="match status" value="1"/>
</dbReference>
<dbReference type="Gene3D" id="3.30.230.10">
    <property type="match status" value="1"/>
</dbReference>
<dbReference type="Gene3D" id="3.30.70.240">
    <property type="match status" value="1"/>
</dbReference>
<dbReference type="Gene3D" id="3.30.70.870">
    <property type="entry name" value="Elongation Factor G (Translational Gtpase), domain 3"/>
    <property type="match status" value="1"/>
</dbReference>
<dbReference type="Gene3D" id="3.40.50.300">
    <property type="entry name" value="P-loop containing nucleotide triphosphate hydrolases"/>
    <property type="match status" value="1"/>
</dbReference>
<dbReference type="Gene3D" id="2.40.30.10">
    <property type="entry name" value="Translation factors"/>
    <property type="match status" value="1"/>
</dbReference>
<dbReference type="HAMAP" id="MF_03059">
    <property type="entry name" value="mEF_G_2"/>
    <property type="match status" value="1"/>
</dbReference>
<dbReference type="InterPro" id="IPR053905">
    <property type="entry name" value="EF-G-like_DII"/>
</dbReference>
<dbReference type="InterPro" id="IPR030851">
    <property type="entry name" value="EFG2"/>
</dbReference>
<dbReference type="InterPro" id="IPR041095">
    <property type="entry name" value="EFG_II"/>
</dbReference>
<dbReference type="InterPro" id="IPR009022">
    <property type="entry name" value="EFG_III"/>
</dbReference>
<dbReference type="InterPro" id="IPR035647">
    <property type="entry name" value="EFG_III/V"/>
</dbReference>
<dbReference type="InterPro" id="IPR035649">
    <property type="entry name" value="EFG_V"/>
</dbReference>
<dbReference type="InterPro" id="IPR000640">
    <property type="entry name" value="EFG_V-like"/>
</dbReference>
<dbReference type="InterPro" id="IPR031157">
    <property type="entry name" value="G_TR_CS"/>
</dbReference>
<dbReference type="InterPro" id="IPR027417">
    <property type="entry name" value="P-loop_NTPase"/>
</dbReference>
<dbReference type="InterPro" id="IPR020568">
    <property type="entry name" value="Ribosomal_Su5_D2-typ_SF"/>
</dbReference>
<dbReference type="InterPro" id="IPR014721">
    <property type="entry name" value="Ribsml_uS5_D2-typ_fold_subgr"/>
</dbReference>
<dbReference type="InterPro" id="IPR005225">
    <property type="entry name" value="Small_GTP-bd"/>
</dbReference>
<dbReference type="InterPro" id="IPR000795">
    <property type="entry name" value="T_Tr_GTP-bd_dom"/>
</dbReference>
<dbReference type="InterPro" id="IPR009000">
    <property type="entry name" value="Transl_B-barrel_sf"/>
</dbReference>
<dbReference type="InterPro" id="IPR005517">
    <property type="entry name" value="Transl_elong_EFG/EF2_IV"/>
</dbReference>
<dbReference type="NCBIfam" id="TIGR00231">
    <property type="entry name" value="small_GTP"/>
    <property type="match status" value="1"/>
</dbReference>
<dbReference type="PANTHER" id="PTHR43261:SF1">
    <property type="entry name" value="RIBOSOME-RELEASING FACTOR 2, MITOCHONDRIAL"/>
    <property type="match status" value="1"/>
</dbReference>
<dbReference type="PANTHER" id="PTHR43261">
    <property type="entry name" value="TRANSLATION ELONGATION FACTOR G-RELATED"/>
    <property type="match status" value="1"/>
</dbReference>
<dbReference type="Pfam" id="PF22042">
    <property type="entry name" value="EF-G_D2"/>
    <property type="match status" value="1"/>
</dbReference>
<dbReference type="Pfam" id="PF00679">
    <property type="entry name" value="EFG_C"/>
    <property type="match status" value="1"/>
</dbReference>
<dbReference type="Pfam" id="PF14492">
    <property type="entry name" value="EFG_III"/>
    <property type="match status" value="1"/>
</dbReference>
<dbReference type="Pfam" id="PF03764">
    <property type="entry name" value="EFG_IV"/>
    <property type="match status" value="1"/>
</dbReference>
<dbReference type="Pfam" id="PF00009">
    <property type="entry name" value="GTP_EFTU"/>
    <property type="match status" value="1"/>
</dbReference>
<dbReference type="PRINTS" id="PR00315">
    <property type="entry name" value="ELONGATNFCT"/>
</dbReference>
<dbReference type="SMART" id="SM00838">
    <property type="entry name" value="EFG_C"/>
    <property type="match status" value="1"/>
</dbReference>
<dbReference type="SMART" id="SM00889">
    <property type="entry name" value="EFG_IV"/>
    <property type="match status" value="1"/>
</dbReference>
<dbReference type="SUPFAM" id="SSF54980">
    <property type="entry name" value="EF-G C-terminal domain-like"/>
    <property type="match status" value="2"/>
</dbReference>
<dbReference type="SUPFAM" id="SSF52540">
    <property type="entry name" value="P-loop containing nucleoside triphosphate hydrolases"/>
    <property type="match status" value="1"/>
</dbReference>
<dbReference type="SUPFAM" id="SSF54211">
    <property type="entry name" value="Ribosomal protein S5 domain 2-like"/>
    <property type="match status" value="1"/>
</dbReference>
<dbReference type="SUPFAM" id="SSF50447">
    <property type="entry name" value="Translation proteins"/>
    <property type="match status" value="1"/>
</dbReference>
<dbReference type="PROSITE" id="PS00301">
    <property type="entry name" value="G_TR_1"/>
    <property type="match status" value="1"/>
</dbReference>
<dbReference type="PROSITE" id="PS51722">
    <property type="entry name" value="G_TR_2"/>
    <property type="match status" value="1"/>
</dbReference>
<sequence length="779" mass="85914">MFTNWRIFAVNRQKTFSVHIHTTCYCKIKANLKRSKTQVPLTRSYSSPPGIVGNEVKSLHSIINPPVAKIRNIGIMAHIDAGKTTTTERILYYSGYTRSLGDVDDGDTVTDFMAQERERGITIQSAAVTLDWKGYRVNLIDTPGHVDFTLEVERCLRVLDGAVAVFDASAGVEAQTLTVWRQADKHKIPRICFLNKMDKTGASFNYAVESIREKLKAKPLILQLPIGEARTFQGVVDVVNREKLIWNSDSDDGKDFERKPLSEASDPTLLKETVEARNSLIEQVADLDDEFADLVLGEFSEDFDLVPAEKLQAAIHRVTLAQAAVPVLCGSALKNKGVQPLLDAVTTYLPSPEEREHGFLQWYKGDLCALAFKVLHDKQRGPLVFLRIYSGTLTPQSAVHNVNRNCTERMSRLLLPFADQHVEIPSLTAGNIALTVGLKQTATGDTIVSSKSSALAAARRAGKGERKPGRISEAESVLLAGVEIPEPVFFCTIEPPSAAKQPDLDHALEHLQREDPSLKVKLDPDSGQTVLCGMGELHIEIIHDRIKREYGLETYLGPLQVAYRETILNSVRATDTLDRVLGDKRHFARAELEVRPAEEPCGVATIEYADSVGEDMLQAPREDIENAIHSACLQGPLLGSPIQDVAVTLHSLMIHPGTSTTMVTACISRCVQKALKKADKQVLEPLMSLEVTVSREYLSPVLADLAQRRGNIQEIQTRQDNKVVLGFVPLAEIMGYSTVLRTLTSGSATFALELSTYQAMSPQDQRTLLSQRSGLARVL</sequence>
<accession>Q5BJP6</accession>
<evidence type="ECO:0000255" key="1">
    <source>
        <dbReference type="HAMAP-Rule" id="MF_03059"/>
    </source>
</evidence>
<evidence type="ECO:0000305" key="2"/>
<feature type="chain" id="PRO_0000385594" description="Ribosome-releasing factor 2, mitochondrial">
    <location>
        <begin position="1"/>
        <end position="779"/>
    </location>
</feature>
<feature type="domain" description="tr-type G">
    <location>
        <begin position="68"/>
        <end position="353"/>
    </location>
</feature>
<feature type="binding site" evidence="1">
    <location>
        <begin position="77"/>
        <end position="84"/>
    </location>
    <ligand>
        <name>GTP</name>
        <dbReference type="ChEBI" id="CHEBI:37565"/>
    </ligand>
</feature>
<feature type="binding site" evidence="1">
    <location>
        <begin position="141"/>
        <end position="145"/>
    </location>
    <ligand>
        <name>GTP</name>
        <dbReference type="ChEBI" id="CHEBI:37565"/>
    </ligand>
</feature>
<feature type="binding site" evidence="1">
    <location>
        <begin position="195"/>
        <end position="198"/>
    </location>
    <ligand>
        <name>GTP</name>
        <dbReference type="ChEBI" id="CHEBI:37565"/>
    </ligand>
</feature>
<feature type="sequence conflict" description="In Ref. 2; AAH91392." evidence="2" ref="2">
    <original>M</original>
    <variation>L</variation>
    <location>
        <position position="616"/>
    </location>
</feature>
<feature type="sequence conflict" description="In Ref. 2; AAH91392." evidence="2" ref="2">
    <original>I</original>
    <variation>V</variation>
    <location>
        <position position="628"/>
    </location>
</feature>
<feature type="sequence conflict" description="In Ref. 2; AAH91392." evidence="2" ref="2">
    <original>V</original>
    <variation>M</variation>
    <location>
        <position position="778"/>
    </location>
</feature>
<organism>
    <name type="scientific">Rattus norvegicus</name>
    <name type="common">Rat</name>
    <dbReference type="NCBI Taxonomy" id="10116"/>
    <lineage>
        <taxon>Eukaryota</taxon>
        <taxon>Metazoa</taxon>
        <taxon>Chordata</taxon>
        <taxon>Craniata</taxon>
        <taxon>Vertebrata</taxon>
        <taxon>Euteleostomi</taxon>
        <taxon>Mammalia</taxon>
        <taxon>Eutheria</taxon>
        <taxon>Euarchontoglires</taxon>
        <taxon>Glires</taxon>
        <taxon>Rodentia</taxon>
        <taxon>Myomorpha</taxon>
        <taxon>Muroidea</taxon>
        <taxon>Muridae</taxon>
        <taxon>Murinae</taxon>
        <taxon>Rattus</taxon>
    </lineage>
</organism>
<reference key="1">
    <citation type="submission" date="2005-07" db="EMBL/GenBank/DDBJ databases">
        <authorList>
            <person name="Mural R.J."/>
            <person name="Adams M.D."/>
            <person name="Myers E.W."/>
            <person name="Smith H.O."/>
            <person name="Venter J.C."/>
        </authorList>
    </citation>
    <scope>NUCLEOTIDE SEQUENCE [LARGE SCALE GENOMIC DNA]</scope>
</reference>
<reference key="2">
    <citation type="journal article" date="2004" name="Genome Res.">
        <title>The status, quality, and expansion of the NIH full-length cDNA project: the Mammalian Gene Collection (MGC).</title>
        <authorList>
            <consortium name="The MGC Project Team"/>
        </authorList>
    </citation>
    <scope>NUCLEOTIDE SEQUENCE [LARGE SCALE MRNA] OF 38-779</scope>
    <source>
        <tissue>Liver</tissue>
    </source>
</reference>
<proteinExistence type="evidence at transcript level"/>